<sequence>MEKKIGFIGCGNMGKAILGGLIASGQVLPGQIWVYTPSPDKVAALHDQFGINAAESAQEVAQIADIIFAAVKPGIMIKVLSEITSSLNKDSLVVSIAAGVTLDQLARALGHDRKIIRAMPNTPALVNAGMTSVTPNALVTPEDTADVLNIFRCFGEAEVIAEPMIHPVVGVSGSSPAYVFMFIEAMADAAVLGGMPRAQAYKFAAQAVMGSAKMVLETGEHPGALKDMVCSPGGTTIEAVRVLEEKGFRAAVIEAMTKCMEKSEKLSKS</sequence>
<proteinExistence type="evidence at protein level"/>
<name>P5CR_ECOLI</name>
<comment type="function">
    <text evidence="1 2 3">Catalyzes the reduction of 1-pyrroline-5-carboxylate (PCA) to L-proline. Does not catalyze the reverse reaction.</text>
</comment>
<comment type="catalytic activity">
    <reaction evidence="1 2 3">
        <text>L-proline + NADP(+) = (S)-1-pyrroline-5-carboxylate + NADPH + 2 H(+)</text>
        <dbReference type="Rhea" id="RHEA:14109"/>
        <dbReference type="ChEBI" id="CHEBI:15378"/>
        <dbReference type="ChEBI" id="CHEBI:17388"/>
        <dbReference type="ChEBI" id="CHEBI:57783"/>
        <dbReference type="ChEBI" id="CHEBI:58349"/>
        <dbReference type="ChEBI" id="CHEBI:60039"/>
        <dbReference type="EC" id="1.5.1.2"/>
    </reaction>
</comment>
<comment type="catalytic activity">
    <reaction evidence="1 2 3">
        <text>L-proline + NAD(+) = (S)-1-pyrroline-5-carboxylate + NADH + 2 H(+)</text>
        <dbReference type="Rhea" id="RHEA:14105"/>
        <dbReference type="ChEBI" id="CHEBI:15378"/>
        <dbReference type="ChEBI" id="CHEBI:17388"/>
        <dbReference type="ChEBI" id="CHEBI:57540"/>
        <dbReference type="ChEBI" id="CHEBI:57945"/>
        <dbReference type="ChEBI" id="CHEBI:60039"/>
        <dbReference type="EC" id="1.5.1.2"/>
    </reaction>
</comment>
<comment type="activity regulation">
    <text evidence="2">Inhibited by p-chloromercuribenzoate.</text>
</comment>
<comment type="pathway">
    <text evidence="1 2 3">Amino-acid biosynthesis; L-proline biosynthesis; L-proline from L-glutamate 5-semialdehyde: step 1/1.</text>
</comment>
<comment type="subcellular location">
    <subcellularLocation>
        <location evidence="1 3">Cytoplasm</location>
    </subcellularLocation>
</comment>
<comment type="miscellaneous">
    <text evidence="4">Can use either NADPH or NADH, but the activity observed with NADPH is severalfold greater.</text>
</comment>
<comment type="similarity">
    <text evidence="1">Belongs to the pyrroline-5-carboxylate reductase family.</text>
</comment>
<protein>
    <recommendedName>
        <fullName evidence="1">Pyrroline-5-carboxylate reductase</fullName>
        <shortName evidence="1">P5C reductase</shortName>
        <shortName evidence="1">P5CR</shortName>
        <ecNumber evidence="1">1.5.1.2</ecNumber>
    </recommendedName>
    <alternativeName>
        <fullName evidence="1">PCA reductase</fullName>
    </alternativeName>
</protein>
<reference key="1">
    <citation type="journal article" date="1982" name="Nucleic Acids Res.">
        <title>Escherichia coli delta 1-pyrroline-5-carboxylate reductase: gene sequence, protein overproduction and purification.</title>
        <authorList>
            <person name="Deutch A.H."/>
            <person name="Smith C.J."/>
            <person name="Rushlow K.E."/>
            <person name="Kretschmer P.J."/>
        </authorList>
    </citation>
    <scope>NUCLEOTIDE SEQUENCE [GENOMIC DNA]</scope>
    <scope>PARTIAL PROTEIN SEQUENCE</scope>
    <scope>FUNCTION</scope>
    <scope>CATALYTIC ACTIVITY</scope>
    <scope>PATHWAY</scope>
    <scope>SUBCELLULAR LOCATION</scope>
</reference>
<reference key="2">
    <citation type="submission" date="1997-01" db="EMBL/GenBank/DDBJ databases">
        <title>Sequence of minutes 4-25 of Escherichia coli.</title>
        <authorList>
            <person name="Chung E."/>
            <person name="Allen E."/>
            <person name="Araujo R."/>
            <person name="Aparicio A.M."/>
            <person name="Davis K."/>
            <person name="Duncan M."/>
            <person name="Federspiel N."/>
            <person name="Hyman R."/>
            <person name="Kalman S."/>
            <person name="Komp C."/>
            <person name="Kurdi O."/>
            <person name="Lew H."/>
            <person name="Lin D."/>
            <person name="Namath A."/>
            <person name="Oefner P."/>
            <person name="Roberts D."/>
            <person name="Schramm S."/>
            <person name="Davis R.W."/>
        </authorList>
    </citation>
    <scope>NUCLEOTIDE SEQUENCE [LARGE SCALE GENOMIC DNA]</scope>
    <source>
        <strain>K12 / MG1655 / ATCC 47076</strain>
    </source>
</reference>
<reference key="3">
    <citation type="journal article" date="1997" name="Science">
        <title>The complete genome sequence of Escherichia coli K-12.</title>
        <authorList>
            <person name="Blattner F.R."/>
            <person name="Plunkett G. III"/>
            <person name="Bloch C.A."/>
            <person name="Perna N.T."/>
            <person name="Burland V."/>
            <person name="Riley M."/>
            <person name="Collado-Vides J."/>
            <person name="Glasner J.D."/>
            <person name="Rode C.K."/>
            <person name="Mayhew G.F."/>
            <person name="Gregor J."/>
            <person name="Davis N.W."/>
            <person name="Kirkpatrick H.A."/>
            <person name="Goeden M.A."/>
            <person name="Rose D.J."/>
            <person name="Mau B."/>
            <person name="Shao Y."/>
        </authorList>
    </citation>
    <scope>NUCLEOTIDE SEQUENCE [LARGE SCALE GENOMIC DNA]</scope>
    <source>
        <strain>K12 / MG1655 / ATCC 47076</strain>
    </source>
</reference>
<reference key="4">
    <citation type="journal article" date="2006" name="Mol. Syst. Biol.">
        <title>Highly accurate genome sequences of Escherichia coli K-12 strains MG1655 and W3110.</title>
        <authorList>
            <person name="Hayashi K."/>
            <person name="Morooka N."/>
            <person name="Yamamoto Y."/>
            <person name="Fujita K."/>
            <person name="Isono K."/>
            <person name="Choi S."/>
            <person name="Ohtsubo E."/>
            <person name="Baba T."/>
            <person name="Wanner B.L."/>
            <person name="Mori H."/>
            <person name="Horiuchi T."/>
        </authorList>
    </citation>
    <scope>NUCLEOTIDE SEQUENCE [LARGE SCALE GENOMIC DNA]</scope>
    <source>
        <strain>K12 / W3110 / ATCC 27325 / DSM 5911</strain>
    </source>
</reference>
<reference key="5">
    <citation type="journal article" date="1977" name="J. Bacteriol.">
        <title>Partial purification and some properties of delta1-pyrroline-5-carboxylate reductase from Escherichia coli.</title>
        <authorList>
            <person name="Rossi J.J."/>
            <person name="Vender J."/>
            <person name="Berg C.M."/>
            <person name="Coleman W.H."/>
        </authorList>
    </citation>
    <scope>FUNCTION</scope>
    <scope>CATALYTIC ACTIVITY</scope>
    <scope>ACTIVITY REGULATION</scope>
    <scope>PATHWAY</scope>
    <source>
        <strain>K12</strain>
    </source>
</reference>
<keyword id="KW-0028">Amino-acid biosynthesis</keyword>
<keyword id="KW-0963">Cytoplasm</keyword>
<keyword id="KW-0903">Direct protein sequencing</keyword>
<keyword id="KW-0521">NADP</keyword>
<keyword id="KW-0560">Oxidoreductase</keyword>
<keyword id="KW-0641">Proline biosynthesis</keyword>
<keyword id="KW-1185">Reference proteome</keyword>
<gene>
    <name evidence="1" type="primary">proC</name>
    <name type="ordered locus">b0386</name>
    <name type="ordered locus">JW0377</name>
</gene>
<accession>P0A9L8</accession>
<accession>P00373</accession>
<accession>Q2MC39</accession>
<feature type="chain" id="PRO_0000187289" description="Pyrroline-5-carboxylate reductase">
    <location>
        <begin position="1"/>
        <end position="269"/>
    </location>
</feature>
<dbReference type="EC" id="1.5.1.2" evidence="1"/>
<dbReference type="EMBL" id="J01665">
    <property type="protein sequence ID" value="AAA86433.1"/>
    <property type="molecule type" value="Genomic_DNA"/>
</dbReference>
<dbReference type="EMBL" id="U73857">
    <property type="protein sequence ID" value="AAB18110.1"/>
    <property type="molecule type" value="Genomic_DNA"/>
</dbReference>
<dbReference type="EMBL" id="U00096">
    <property type="protein sequence ID" value="AAC73489.1"/>
    <property type="molecule type" value="Genomic_DNA"/>
</dbReference>
<dbReference type="EMBL" id="AP009048">
    <property type="protein sequence ID" value="BAE76167.1"/>
    <property type="molecule type" value="Genomic_DNA"/>
</dbReference>
<dbReference type="PIR" id="A00385">
    <property type="entry name" value="RDECC"/>
</dbReference>
<dbReference type="RefSeq" id="NP_414920.1">
    <property type="nucleotide sequence ID" value="NC_000913.3"/>
</dbReference>
<dbReference type="RefSeq" id="WP_001295331.1">
    <property type="nucleotide sequence ID" value="NZ_STEB01000007.1"/>
</dbReference>
<dbReference type="SMR" id="P0A9L8"/>
<dbReference type="BioGRID" id="4263533">
    <property type="interactions" value="40"/>
</dbReference>
<dbReference type="BioGRID" id="849425">
    <property type="interactions" value="1"/>
</dbReference>
<dbReference type="DIP" id="DIP-47863N"/>
<dbReference type="FunCoup" id="P0A9L8">
    <property type="interactions" value="738"/>
</dbReference>
<dbReference type="IntAct" id="P0A9L8">
    <property type="interactions" value="4"/>
</dbReference>
<dbReference type="STRING" id="511145.b0386"/>
<dbReference type="jPOST" id="P0A9L8"/>
<dbReference type="PaxDb" id="511145-b0386"/>
<dbReference type="EnsemblBacteria" id="AAC73489">
    <property type="protein sequence ID" value="AAC73489"/>
    <property type="gene ID" value="b0386"/>
</dbReference>
<dbReference type="GeneID" id="93777075"/>
<dbReference type="GeneID" id="945034"/>
<dbReference type="KEGG" id="ecj:JW0377"/>
<dbReference type="KEGG" id="eco:b0386"/>
<dbReference type="KEGG" id="ecoc:C3026_01870"/>
<dbReference type="PATRIC" id="fig|1411691.4.peg.1892"/>
<dbReference type="EchoBASE" id="EB0762"/>
<dbReference type="eggNOG" id="COG0345">
    <property type="taxonomic scope" value="Bacteria"/>
</dbReference>
<dbReference type="HOGENOM" id="CLU_042344_3_1_6"/>
<dbReference type="InParanoid" id="P0A9L8"/>
<dbReference type="OMA" id="VWAVKPQ"/>
<dbReference type="OrthoDB" id="9805754at2"/>
<dbReference type="PhylomeDB" id="P0A9L8"/>
<dbReference type="BioCyc" id="EcoCyc:PYRROLINECARBREDUCT-MONOMER"/>
<dbReference type="BioCyc" id="MetaCyc:PYRROLINECARBREDUCT-MONOMER"/>
<dbReference type="UniPathway" id="UPA00098">
    <property type="reaction ID" value="UER00361"/>
</dbReference>
<dbReference type="PRO" id="PR:P0A9L8"/>
<dbReference type="Proteomes" id="UP000000625">
    <property type="component" value="Chromosome"/>
</dbReference>
<dbReference type="GO" id="GO:0005829">
    <property type="term" value="C:cytosol"/>
    <property type="evidence" value="ECO:0000314"/>
    <property type="project" value="EcoCyc"/>
</dbReference>
<dbReference type="GO" id="GO:0042802">
    <property type="term" value="F:identical protein binding"/>
    <property type="evidence" value="ECO:0000314"/>
    <property type="project" value="EcoCyc"/>
</dbReference>
<dbReference type="GO" id="GO:0004735">
    <property type="term" value="F:pyrroline-5-carboxylate reductase activity"/>
    <property type="evidence" value="ECO:0000314"/>
    <property type="project" value="EcoCyc"/>
</dbReference>
<dbReference type="GO" id="GO:0055129">
    <property type="term" value="P:L-proline biosynthetic process"/>
    <property type="evidence" value="ECO:0000315"/>
    <property type="project" value="EcoCyc"/>
</dbReference>
<dbReference type="FunFam" id="1.10.3730.10:FF:000001">
    <property type="entry name" value="Pyrroline-5-carboxylate reductase"/>
    <property type="match status" value="1"/>
</dbReference>
<dbReference type="FunFam" id="3.40.50.720:FF:000105">
    <property type="entry name" value="Pyrroline-5-carboxylate reductase"/>
    <property type="match status" value="1"/>
</dbReference>
<dbReference type="Gene3D" id="3.40.50.720">
    <property type="entry name" value="NAD(P)-binding Rossmann-like Domain"/>
    <property type="match status" value="1"/>
</dbReference>
<dbReference type="Gene3D" id="1.10.3730.10">
    <property type="entry name" value="ProC C-terminal domain-like"/>
    <property type="match status" value="1"/>
</dbReference>
<dbReference type="HAMAP" id="MF_01925">
    <property type="entry name" value="P5C_reductase"/>
    <property type="match status" value="1"/>
</dbReference>
<dbReference type="InterPro" id="IPR008927">
    <property type="entry name" value="6-PGluconate_DH-like_C_sf"/>
</dbReference>
<dbReference type="InterPro" id="IPR036291">
    <property type="entry name" value="NAD(P)-bd_dom_sf"/>
</dbReference>
<dbReference type="InterPro" id="IPR028939">
    <property type="entry name" value="P5C_Rdtase_cat_N"/>
</dbReference>
<dbReference type="InterPro" id="IPR053790">
    <property type="entry name" value="P5CR-like_CS"/>
</dbReference>
<dbReference type="InterPro" id="IPR029036">
    <property type="entry name" value="P5CR_dimer"/>
</dbReference>
<dbReference type="InterPro" id="IPR000304">
    <property type="entry name" value="Pyrroline-COOH_reductase"/>
</dbReference>
<dbReference type="NCBIfam" id="TIGR00112">
    <property type="entry name" value="proC"/>
    <property type="match status" value="1"/>
</dbReference>
<dbReference type="PANTHER" id="PTHR11645">
    <property type="entry name" value="PYRROLINE-5-CARBOXYLATE REDUCTASE"/>
    <property type="match status" value="1"/>
</dbReference>
<dbReference type="PANTHER" id="PTHR11645:SF0">
    <property type="entry name" value="PYRROLINE-5-CARBOXYLATE REDUCTASE 3"/>
    <property type="match status" value="1"/>
</dbReference>
<dbReference type="Pfam" id="PF03807">
    <property type="entry name" value="F420_oxidored"/>
    <property type="match status" value="1"/>
</dbReference>
<dbReference type="Pfam" id="PF14748">
    <property type="entry name" value="P5CR_dimer"/>
    <property type="match status" value="1"/>
</dbReference>
<dbReference type="PIRSF" id="PIRSF000193">
    <property type="entry name" value="Pyrrol-5-carb_rd"/>
    <property type="match status" value="1"/>
</dbReference>
<dbReference type="SUPFAM" id="SSF48179">
    <property type="entry name" value="6-phosphogluconate dehydrogenase C-terminal domain-like"/>
    <property type="match status" value="1"/>
</dbReference>
<dbReference type="SUPFAM" id="SSF51735">
    <property type="entry name" value="NAD(P)-binding Rossmann-fold domains"/>
    <property type="match status" value="1"/>
</dbReference>
<dbReference type="PROSITE" id="PS00521">
    <property type="entry name" value="P5CR"/>
    <property type="match status" value="1"/>
</dbReference>
<organism>
    <name type="scientific">Escherichia coli (strain K12)</name>
    <dbReference type="NCBI Taxonomy" id="83333"/>
    <lineage>
        <taxon>Bacteria</taxon>
        <taxon>Pseudomonadati</taxon>
        <taxon>Pseudomonadota</taxon>
        <taxon>Gammaproteobacteria</taxon>
        <taxon>Enterobacterales</taxon>
        <taxon>Enterobacteriaceae</taxon>
        <taxon>Escherichia</taxon>
    </lineage>
</organism>
<evidence type="ECO:0000255" key="1">
    <source>
        <dbReference type="HAMAP-Rule" id="MF_01925"/>
    </source>
</evidence>
<evidence type="ECO:0000269" key="2">
    <source>
    </source>
</evidence>
<evidence type="ECO:0000269" key="3">
    <source>
    </source>
</evidence>
<evidence type="ECO:0000305" key="4">
    <source>
    </source>
</evidence>